<comment type="catalytic activity">
    <reaction>
        <text>pyruvate + ATP = phosphoenolpyruvate + ADP + H(+)</text>
        <dbReference type="Rhea" id="RHEA:18157"/>
        <dbReference type="ChEBI" id="CHEBI:15361"/>
        <dbReference type="ChEBI" id="CHEBI:15378"/>
        <dbReference type="ChEBI" id="CHEBI:30616"/>
        <dbReference type="ChEBI" id="CHEBI:58702"/>
        <dbReference type="ChEBI" id="CHEBI:456216"/>
        <dbReference type="EC" id="2.7.1.40"/>
    </reaction>
</comment>
<comment type="cofactor">
    <cofactor evidence="1">
        <name>Mg(2+)</name>
        <dbReference type="ChEBI" id="CHEBI:18420"/>
    </cofactor>
</comment>
<comment type="cofactor">
    <cofactor evidence="1">
        <name>K(+)</name>
        <dbReference type="ChEBI" id="CHEBI:29103"/>
    </cofactor>
</comment>
<comment type="pathway">
    <text>Carbohydrate degradation; glycolysis; pyruvate from D-glyceraldehyde 3-phosphate: step 5/5.</text>
</comment>
<comment type="subunit">
    <text evidence="1">Homotetramer.</text>
</comment>
<comment type="subcellular location">
    <subcellularLocation>
        <location>Cytoplasm</location>
    </subcellularLocation>
</comment>
<comment type="similarity">
    <text evidence="4">Belongs to the pyruvate kinase family.</text>
</comment>
<proteinExistence type="evidence at transcript level"/>
<feature type="chain" id="PRO_0000112125" description="Pyruvate kinase, cytosolic isozyme">
    <location>
        <begin position="1"/>
        <end position="511"/>
    </location>
</feature>
<feature type="binding site" evidence="1">
    <location>
        <position position="51"/>
    </location>
    <ligand>
        <name>substrate</name>
    </ligand>
</feature>
<feature type="binding site" evidence="2">
    <location>
        <begin position="53"/>
        <end position="56"/>
    </location>
    <ligand>
        <name>ATP</name>
        <dbReference type="ChEBI" id="CHEBI:30616"/>
    </ligand>
</feature>
<feature type="binding site" evidence="1">
    <location>
        <position position="53"/>
    </location>
    <ligand>
        <name>K(+)</name>
        <dbReference type="ChEBI" id="CHEBI:29103"/>
    </ligand>
</feature>
<feature type="binding site" evidence="1">
    <location>
        <position position="55"/>
    </location>
    <ligand>
        <name>K(+)</name>
        <dbReference type="ChEBI" id="CHEBI:29103"/>
    </ligand>
</feature>
<feature type="binding site" evidence="1">
    <location>
        <position position="85"/>
    </location>
    <ligand>
        <name>K(+)</name>
        <dbReference type="ChEBI" id="CHEBI:29103"/>
    </ligand>
</feature>
<feature type="binding site" evidence="1">
    <location>
        <position position="86"/>
    </location>
    <ligand>
        <name>K(+)</name>
        <dbReference type="ChEBI" id="CHEBI:29103"/>
    </ligand>
</feature>
<feature type="binding site" evidence="2">
    <location>
        <position position="92"/>
    </location>
    <ligand>
        <name>ATP</name>
        <dbReference type="ChEBI" id="CHEBI:30616"/>
    </ligand>
</feature>
<feature type="binding site" evidence="2">
    <location>
        <position position="177"/>
    </location>
    <ligand>
        <name>ATP</name>
        <dbReference type="ChEBI" id="CHEBI:30616"/>
    </ligand>
</feature>
<feature type="binding site" evidence="3">
    <location>
        <position position="243"/>
    </location>
    <ligand>
        <name>Mg(2+)</name>
        <dbReference type="ChEBI" id="CHEBI:18420"/>
    </ligand>
</feature>
<feature type="binding site" evidence="1">
    <location>
        <position position="266"/>
    </location>
    <ligand>
        <name>substrate</name>
    </ligand>
</feature>
<feature type="binding site" evidence="1">
    <location>
        <position position="267"/>
    </location>
    <ligand>
        <name>Mg(2+)</name>
        <dbReference type="ChEBI" id="CHEBI:18420"/>
    </ligand>
</feature>
<feature type="binding site" evidence="1">
    <location>
        <position position="267"/>
    </location>
    <ligand>
        <name>substrate</name>
    </ligand>
</feature>
<feature type="binding site" evidence="1">
    <location>
        <position position="299"/>
    </location>
    <ligand>
        <name>substrate</name>
    </ligand>
</feature>
<feature type="site" description="Transition state stabilizer" evidence="1">
    <location>
        <position position="241"/>
    </location>
</feature>
<sequence length="511" mass="55302">MANIDIEGILKQQQPYDGRVPKTKIVCTLGPASRSVEMTEKLLRAGMNVARFNFSHGTHDYHQETLNNLKTAMHNTGILCAVMLDTKGPEIRTGFLKDGKPIQLKEGQEVTITTDYDIKGDPEMISMSYKKLPVHLKPGNTILCSDGTITLTVLSCDPDAGTVRCRCENTATLGERKNVNLPGVVVDLPTLTEKDKEDILGWGVPNKIDMIALSFVRKGSDLVNVRKVLGPHAKNIQLMSKVENQEGVLNFDEILRETDAFMVARGDLGMEIPVEKIFLAQKMMIYKCNLVGKPVVTATQMLESMIKSPRPTRAEATDVANAVLDGTDCVMLSGESAAGAYPELAVKIMARICIEAESSLDYGAIFKEMIRSTPLPMSPLESLASSAVRTANKAKAKLIVVLTRGGSTAKLVAKYRPAVPILSVVVPVLSTDSFDWTCSDETPARHSLIYRGLIPILGEGSAKATDAESTEVILEAALKSATERALCKPGDAVVALHRIGAASVIKICIVK</sequence>
<name>KPYC_SOYBN</name>
<protein>
    <recommendedName>
        <fullName>Pyruvate kinase, cytosolic isozyme</fullName>
        <shortName>PK</shortName>
        <ecNumber>2.7.1.40</ecNumber>
    </recommendedName>
</protein>
<evidence type="ECO:0000250" key="1"/>
<evidence type="ECO:0000250" key="2">
    <source>
        <dbReference type="UniProtKB" id="P14618"/>
    </source>
</evidence>
<evidence type="ECO:0000255" key="3"/>
<evidence type="ECO:0000305" key="4"/>
<accession>Q42806</accession>
<keyword id="KW-0067">ATP-binding</keyword>
<keyword id="KW-0963">Cytoplasm</keyword>
<keyword id="KW-0324">Glycolysis</keyword>
<keyword id="KW-0418">Kinase</keyword>
<keyword id="KW-0460">Magnesium</keyword>
<keyword id="KW-0479">Metal-binding</keyword>
<keyword id="KW-0547">Nucleotide-binding</keyword>
<keyword id="KW-0630">Potassium</keyword>
<keyword id="KW-0670">Pyruvate</keyword>
<keyword id="KW-1185">Reference proteome</keyword>
<keyword id="KW-0808">Transferase</keyword>
<dbReference type="EC" id="2.7.1.40"/>
<dbReference type="EMBL" id="L08632">
    <property type="protein sequence ID" value="AAA17000.1"/>
    <property type="molecule type" value="mRNA"/>
</dbReference>
<dbReference type="PIR" id="T07787">
    <property type="entry name" value="T07787"/>
</dbReference>
<dbReference type="RefSeq" id="NP_001237968.1">
    <property type="nucleotide sequence ID" value="NM_001251039.1"/>
</dbReference>
<dbReference type="SMR" id="Q42806"/>
<dbReference type="FunCoup" id="Q42806">
    <property type="interactions" value="3802"/>
</dbReference>
<dbReference type="STRING" id="3847.Q42806"/>
<dbReference type="PaxDb" id="3847-GLYMA05G09310.2"/>
<dbReference type="ProMEX" id="Q42806"/>
<dbReference type="EnsemblPlants" id="KRH56499">
    <property type="protein sequence ID" value="KRH56499"/>
    <property type="gene ID" value="GLYMA_05G000700"/>
</dbReference>
<dbReference type="EnsemblPlants" id="KRH56500">
    <property type="protein sequence ID" value="KRH56500"/>
    <property type="gene ID" value="GLYMA_05G000700"/>
</dbReference>
<dbReference type="GeneID" id="547791"/>
<dbReference type="Gramene" id="KRH56499">
    <property type="protein sequence ID" value="KRH56499"/>
    <property type="gene ID" value="GLYMA_05G000700"/>
</dbReference>
<dbReference type="Gramene" id="KRH56500">
    <property type="protein sequence ID" value="KRH56500"/>
    <property type="gene ID" value="GLYMA_05G000700"/>
</dbReference>
<dbReference type="KEGG" id="gmx:547791"/>
<dbReference type="eggNOG" id="KOG2323">
    <property type="taxonomic scope" value="Eukaryota"/>
</dbReference>
<dbReference type="HOGENOM" id="CLU_015439_0_1_1"/>
<dbReference type="InParanoid" id="Q42806"/>
<dbReference type="OMA" id="FERCDES"/>
<dbReference type="OrthoDB" id="108365at2759"/>
<dbReference type="UniPathway" id="UPA00109">
    <property type="reaction ID" value="UER00188"/>
</dbReference>
<dbReference type="Proteomes" id="UP000008827">
    <property type="component" value="Chromosome 5"/>
</dbReference>
<dbReference type="GO" id="GO:0005737">
    <property type="term" value="C:cytoplasm"/>
    <property type="evidence" value="ECO:0000318"/>
    <property type="project" value="GO_Central"/>
</dbReference>
<dbReference type="GO" id="GO:0005524">
    <property type="term" value="F:ATP binding"/>
    <property type="evidence" value="ECO:0007669"/>
    <property type="project" value="UniProtKB-KW"/>
</dbReference>
<dbReference type="GO" id="GO:0016301">
    <property type="term" value="F:kinase activity"/>
    <property type="evidence" value="ECO:0007669"/>
    <property type="project" value="UniProtKB-KW"/>
</dbReference>
<dbReference type="GO" id="GO:0000287">
    <property type="term" value="F:magnesium ion binding"/>
    <property type="evidence" value="ECO:0007669"/>
    <property type="project" value="InterPro"/>
</dbReference>
<dbReference type="GO" id="GO:0030955">
    <property type="term" value="F:potassium ion binding"/>
    <property type="evidence" value="ECO:0007669"/>
    <property type="project" value="InterPro"/>
</dbReference>
<dbReference type="GO" id="GO:0004743">
    <property type="term" value="F:pyruvate kinase activity"/>
    <property type="evidence" value="ECO:0000318"/>
    <property type="project" value="GO_Central"/>
</dbReference>
<dbReference type="GO" id="GO:0006096">
    <property type="term" value="P:glycolytic process"/>
    <property type="evidence" value="ECO:0000318"/>
    <property type="project" value="GO_Central"/>
</dbReference>
<dbReference type="CDD" id="cd00288">
    <property type="entry name" value="Pyruvate_Kinase"/>
    <property type="match status" value="1"/>
</dbReference>
<dbReference type="FunFam" id="2.40.33.10:FF:000001">
    <property type="entry name" value="Pyruvate kinase"/>
    <property type="match status" value="1"/>
</dbReference>
<dbReference type="FunFam" id="3.20.20.60:FF:000001">
    <property type="entry name" value="Pyruvate kinase"/>
    <property type="match status" value="1"/>
</dbReference>
<dbReference type="FunFam" id="3.40.1380.20:FF:000005">
    <property type="entry name" value="Pyruvate kinase"/>
    <property type="match status" value="1"/>
</dbReference>
<dbReference type="Gene3D" id="3.20.20.60">
    <property type="entry name" value="Phosphoenolpyruvate-binding domains"/>
    <property type="match status" value="1"/>
</dbReference>
<dbReference type="Gene3D" id="2.40.33.10">
    <property type="entry name" value="PK beta-barrel domain-like"/>
    <property type="match status" value="1"/>
</dbReference>
<dbReference type="Gene3D" id="3.40.1380.20">
    <property type="entry name" value="Pyruvate kinase, C-terminal domain"/>
    <property type="match status" value="1"/>
</dbReference>
<dbReference type="InterPro" id="IPR001697">
    <property type="entry name" value="Pyr_Knase"/>
</dbReference>
<dbReference type="InterPro" id="IPR015813">
    <property type="entry name" value="Pyrv/PenolPyrv_kinase-like_dom"/>
</dbReference>
<dbReference type="InterPro" id="IPR040442">
    <property type="entry name" value="Pyrv_kinase-like_dom_sf"/>
</dbReference>
<dbReference type="InterPro" id="IPR011037">
    <property type="entry name" value="Pyrv_Knase-like_insert_dom_sf"/>
</dbReference>
<dbReference type="InterPro" id="IPR018209">
    <property type="entry name" value="Pyrv_Knase_AS"/>
</dbReference>
<dbReference type="InterPro" id="IPR015793">
    <property type="entry name" value="Pyrv_Knase_brl"/>
</dbReference>
<dbReference type="InterPro" id="IPR015795">
    <property type="entry name" value="Pyrv_Knase_C"/>
</dbReference>
<dbReference type="InterPro" id="IPR036918">
    <property type="entry name" value="Pyrv_Knase_C_sf"/>
</dbReference>
<dbReference type="InterPro" id="IPR015806">
    <property type="entry name" value="Pyrv_Knase_insert_dom_sf"/>
</dbReference>
<dbReference type="NCBIfam" id="NF004491">
    <property type="entry name" value="PRK05826.1"/>
    <property type="match status" value="1"/>
</dbReference>
<dbReference type="NCBIfam" id="NF004978">
    <property type="entry name" value="PRK06354.1"/>
    <property type="match status" value="1"/>
</dbReference>
<dbReference type="NCBIfam" id="TIGR01064">
    <property type="entry name" value="pyruv_kin"/>
    <property type="match status" value="1"/>
</dbReference>
<dbReference type="PANTHER" id="PTHR11817">
    <property type="entry name" value="PYRUVATE KINASE"/>
    <property type="match status" value="1"/>
</dbReference>
<dbReference type="Pfam" id="PF00224">
    <property type="entry name" value="PK"/>
    <property type="match status" value="1"/>
</dbReference>
<dbReference type="Pfam" id="PF02887">
    <property type="entry name" value="PK_C"/>
    <property type="match status" value="1"/>
</dbReference>
<dbReference type="PRINTS" id="PR01050">
    <property type="entry name" value="PYRUVTKNASE"/>
</dbReference>
<dbReference type="SUPFAM" id="SSF51621">
    <property type="entry name" value="Phosphoenolpyruvate/pyruvate domain"/>
    <property type="match status" value="1"/>
</dbReference>
<dbReference type="SUPFAM" id="SSF50800">
    <property type="entry name" value="PK beta-barrel domain-like"/>
    <property type="match status" value="1"/>
</dbReference>
<dbReference type="SUPFAM" id="SSF52935">
    <property type="entry name" value="PK C-terminal domain-like"/>
    <property type="match status" value="1"/>
</dbReference>
<dbReference type="PROSITE" id="PS00110">
    <property type="entry name" value="PYRUVATE_KINASE"/>
    <property type="match status" value="1"/>
</dbReference>
<reference key="1">
    <citation type="journal article" date="1993" name="Plant Physiol.">
        <title>A pyruvate kinase cDNA from soybean somatic embryos.</title>
        <authorList>
            <person name="Ma H."/>
            <person name="McMullen M.D."/>
            <person name="Finer J.J."/>
        </authorList>
    </citation>
    <scope>NUCLEOTIDE SEQUENCE [MRNA]</scope>
</reference>
<organism>
    <name type="scientific">Glycine max</name>
    <name type="common">Soybean</name>
    <name type="synonym">Glycine hispida</name>
    <dbReference type="NCBI Taxonomy" id="3847"/>
    <lineage>
        <taxon>Eukaryota</taxon>
        <taxon>Viridiplantae</taxon>
        <taxon>Streptophyta</taxon>
        <taxon>Embryophyta</taxon>
        <taxon>Tracheophyta</taxon>
        <taxon>Spermatophyta</taxon>
        <taxon>Magnoliopsida</taxon>
        <taxon>eudicotyledons</taxon>
        <taxon>Gunneridae</taxon>
        <taxon>Pentapetalae</taxon>
        <taxon>rosids</taxon>
        <taxon>fabids</taxon>
        <taxon>Fabales</taxon>
        <taxon>Fabaceae</taxon>
        <taxon>Papilionoideae</taxon>
        <taxon>50 kb inversion clade</taxon>
        <taxon>NPAAA clade</taxon>
        <taxon>indigoferoid/millettioid clade</taxon>
        <taxon>Phaseoleae</taxon>
        <taxon>Glycine</taxon>
        <taxon>Glycine subgen. Soja</taxon>
    </lineage>
</organism>